<name>YIDC_XANE5</name>
<dbReference type="EMBL" id="AM039952">
    <property type="protein sequence ID" value="CAJ26216.1"/>
    <property type="molecule type" value="Genomic_DNA"/>
</dbReference>
<dbReference type="RefSeq" id="WP_011349218.1">
    <property type="nucleotide sequence ID" value="NZ_CP017190.1"/>
</dbReference>
<dbReference type="SMR" id="Q3BLZ7"/>
<dbReference type="STRING" id="456327.BJD11_22965"/>
<dbReference type="KEGG" id="xcv:XCV4485"/>
<dbReference type="eggNOG" id="COG0706">
    <property type="taxonomic scope" value="Bacteria"/>
</dbReference>
<dbReference type="HOGENOM" id="CLU_016535_3_0_6"/>
<dbReference type="Proteomes" id="UP000007069">
    <property type="component" value="Chromosome"/>
</dbReference>
<dbReference type="GO" id="GO:0005886">
    <property type="term" value="C:plasma membrane"/>
    <property type="evidence" value="ECO:0007669"/>
    <property type="project" value="UniProtKB-SubCell"/>
</dbReference>
<dbReference type="GO" id="GO:0032977">
    <property type="term" value="F:membrane insertase activity"/>
    <property type="evidence" value="ECO:0007669"/>
    <property type="project" value="InterPro"/>
</dbReference>
<dbReference type="GO" id="GO:0051205">
    <property type="term" value="P:protein insertion into membrane"/>
    <property type="evidence" value="ECO:0007669"/>
    <property type="project" value="TreeGrafter"/>
</dbReference>
<dbReference type="GO" id="GO:0015031">
    <property type="term" value="P:protein transport"/>
    <property type="evidence" value="ECO:0007669"/>
    <property type="project" value="UniProtKB-KW"/>
</dbReference>
<dbReference type="CDD" id="cd20070">
    <property type="entry name" value="5TM_YidC_Alb3"/>
    <property type="match status" value="1"/>
</dbReference>
<dbReference type="CDD" id="cd19961">
    <property type="entry name" value="EcYidC-like_peri"/>
    <property type="match status" value="1"/>
</dbReference>
<dbReference type="FunFam" id="2.70.98.90:FF:000002">
    <property type="entry name" value="Membrane protein insertase YidC"/>
    <property type="match status" value="1"/>
</dbReference>
<dbReference type="Gene3D" id="2.70.98.90">
    <property type="match status" value="1"/>
</dbReference>
<dbReference type="HAMAP" id="MF_01810">
    <property type="entry name" value="YidC_type1"/>
    <property type="match status" value="1"/>
</dbReference>
<dbReference type="InterPro" id="IPR019998">
    <property type="entry name" value="Membr_insert_YidC"/>
</dbReference>
<dbReference type="InterPro" id="IPR028053">
    <property type="entry name" value="Membr_insert_YidC_N"/>
</dbReference>
<dbReference type="InterPro" id="IPR001708">
    <property type="entry name" value="YidC/ALB3/OXA1/COX18"/>
</dbReference>
<dbReference type="InterPro" id="IPR028055">
    <property type="entry name" value="YidC/Oxa/ALB_C"/>
</dbReference>
<dbReference type="InterPro" id="IPR047196">
    <property type="entry name" value="YidC_ALB_C"/>
</dbReference>
<dbReference type="InterPro" id="IPR038221">
    <property type="entry name" value="YidC_periplasmic_sf"/>
</dbReference>
<dbReference type="NCBIfam" id="NF002352">
    <property type="entry name" value="PRK01318.1-3"/>
    <property type="match status" value="1"/>
</dbReference>
<dbReference type="NCBIfam" id="TIGR03593">
    <property type="entry name" value="yidC_nterm"/>
    <property type="match status" value="1"/>
</dbReference>
<dbReference type="NCBIfam" id="TIGR03592">
    <property type="entry name" value="yidC_oxa1_cterm"/>
    <property type="match status" value="1"/>
</dbReference>
<dbReference type="PANTHER" id="PTHR12428:SF65">
    <property type="entry name" value="CYTOCHROME C OXIDASE ASSEMBLY PROTEIN COX18, MITOCHONDRIAL"/>
    <property type="match status" value="1"/>
</dbReference>
<dbReference type="PANTHER" id="PTHR12428">
    <property type="entry name" value="OXA1"/>
    <property type="match status" value="1"/>
</dbReference>
<dbReference type="Pfam" id="PF02096">
    <property type="entry name" value="60KD_IMP"/>
    <property type="match status" value="1"/>
</dbReference>
<dbReference type="Pfam" id="PF14849">
    <property type="entry name" value="YidC_periplas"/>
    <property type="match status" value="1"/>
</dbReference>
<dbReference type="PRINTS" id="PR00701">
    <property type="entry name" value="60KDINNERMP"/>
</dbReference>
<dbReference type="PRINTS" id="PR01900">
    <property type="entry name" value="YIDCPROTEIN"/>
</dbReference>
<comment type="function">
    <text evidence="1">Required for the insertion and/or proper folding and/or complex formation of integral membrane proteins into the membrane. Involved in integration of membrane proteins that insert both dependently and independently of the Sec translocase complex, as well as at least some lipoproteins. Aids folding of multispanning membrane proteins.</text>
</comment>
<comment type="subunit">
    <text evidence="1">Interacts with the Sec translocase complex via SecD. Specifically interacts with transmembrane segments of nascent integral membrane proteins during membrane integration.</text>
</comment>
<comment type="subcellular location">
    <subcellularLocation>
        <location evidence="1">Cell inner membrane</location>
        <topology evidence="1">Multi-pass membrane protein</topology>
    </subcellularLocation>
</comment>
<comment type="similarity">
    <text evidence="1">Belongs to the OXA1/ALB3/YidC family. Type 1 subfamily.</text>
</comment>
<sequence length="574" mass="63364">MNQTRVFLIFAWLMVAALLWMEWGKDKAAANAPVAAATQAVPAARDPDAAAPSAANVPSAQPIPQAGAPGTVPATSSTAATPAAAGAAPVVTLTSDVLRLKLDGRSVLDAELLQFPQTKDGTEPVSLLTEDPAHPYNATSGWASEHSPVPGVGGFRAEQPGTTFEMAKGQNTLVVPFVWNGPDGVSIRRTFTLERGRYAISIKDEVINKSGAPWNGYVFRKLSRVPTILSRGMTNPDSFSFNGATWYSPQEGYERRAFKDYMDDGGLNRQITGGWVALLQHHFFTAWIPQKDQASLYVLAQDGPRDVAELRGPAFTVAPGQTASTEARLWVGPKLVNLIAKEDVKGLDRVVDYSRFSIMAIIGQGLFWVLSHLHSFLHNWGWAIIGLVVLLRLALYPLSAAQYKSGAKMRRFQPRLAQLKERYGDDRVKYQQATMELFKKEKINPMGGCLPLLIQMPIFFALYWVLVESVELRQAPWLGWIQDLTARDPYFILPLLNISIMWATQKLTPTPGMDPMQAKMMQFMPLVFGVMMAFMPAGLVLYWVVNGGLGLLIQWWMIRQHGEKPSKIIQANAK</sequence>
<reference key="1">
    <citation type="journal article" date="2005" name="J. Bacteriol.">
        <title>Insights into genome plasticity and pathogenicity of the plant pathogenic Bacterium Xanthomonas campestris pv. vesicatoria revealed by the complete genome sequence.</title>
        <authorList>
            <person name="Thieme F."/>
            <person name="Koebnik R."/>
            <person name="Bekel T."/>
            <person name="Berger C."/>
            <person name="Boch J."/>
            <person name="Buettner D."/>
            <person name="Caldana C."/>
            <person name="Gaigalat L."/>
            <person name="Goesmann A."/>
            <person name="Kay S."/>
            <person name="Kirchner O."/>
            <person name="Lanz C."/>
            <person name="Linke B."/>
            <person name="McHardy A.C."/>
            <person name="Meyer F."/>
            <person name="Mittenhuber G."/>
            <person name="Nies D.H."/>
            <person name="Niesbach-Kloesgen U."/>
            <person name="Patschkowski T."/>
            <person name="Rueckert C."/>
            <person name="Rupp O."/>
            <person name="Schneiker S."/>
            <person name="Schuster S.C."/>
            <person name="Vorhoelter F.J."/>
            <person name="Weber E."/>
            <person name="Puehler A."/>
            <person name="Bonas U."/>
            <person name="Bartels D."/>
            <person name="Kaiser O."/>
        </authorList>
    </citation>
    <scope>NUCLEOTIDE SEQUENCE [LARGE SCALE GENOMIC DNA]</scope>
    <source>
        <strain>85-10</strain>
    </source>
</reference>
<organism>
    <name type="scientific">Xanthomonas euvesicatoria pv. vesicatoria (strain 85-10)</name>
    <name type="common">Xanthomonas campestris pv. vesicatoria</name>
    <dbReference type="NCBI Taxonomy" id="316273"/>
    <lineage>
        <taxon>Bacteria</taxon>
        <taxon>Pseudomonadati</taxon>
        <taxon>Pseudomonadota</taxon>
        <taxon>Gammaproteobacteria</taxon>
        <taxon>Lysobacterales</taxon>
        <taxon>Lysobacteraceae</taxon>
        <taxon>Xanthomonas</taxon>
    </lineage>
</organism>
<keyword id="KW-0997">Cell inner membrane</keyword>
<keyword id="KW-1003">Cell membrane</keyword>
<keyword id="KW-0143">Chaperone</keyword>
<keyword id="KW-0472">Membrane</keyword>
<keyword id="KW-0653">Protein transport</keyword>
<keyword id="KW-0812">Transmembrane</keyword>
<keyword id="KW-1133">Transmembrane helix</keyword>
<keyword id="KW-0813">Transport</keyword>
<proteinExistence type="inferred from homology"/>
<evidence type="ECO:0000255" key="1">
    <source>
        <dbReference type="HAMAP-Rule" id="MF_01810"/>
    </source>
</evidence>
<evidence type="ECO:0000256" key="2">
    <source>
        <dbReference type="SAM" id="MobiDB-lite"/>
    </source>
</evidence>
<accession>Q3BLZ7</accession>
<protein>
    <recommendedName>
        <fullName evidence="1">Membrane protein insertase YidC</fullName>
    </recommendedName>
    <alternativeName>
        <fullName evidence="1">Foldase YidC</fullName>
    </alternativeName>
    <alternativeName>
        <fullName evidence="1">Membrane integrase YidC</fullName>
    </alternativeName>
    <alternativeName>
        <fullName evidence="1">Membrane protein YidC</fullName>
    </alternativeName>
</protein>
<gene>
    <name evidence="1" type="primary">yidC</name>
    <name type="ordered locus">XCV4485</name>
</gene>
<feature type="chain" id="PRO_1000070188" description="Membrane protein insertase YidC">
    <location>
        <begin position="1"/>
        <end position="574"/>
    </location>
</feature>
<feature type="transmembrane region" description="Helical" evidence="1">
    <location>
        <begin position="6"/>
        <end position="26"/>
    </location>
</feature>
<feature type="transmembrane region" description="Helical" evidence="1">
    <location>
        <begin position="356"/>
        <end position="376"/>
    </location>
</feature>
<feature type="transmembrane region" description="Helical" evidence="1">
    <location>
        <begin position="380"/>
        <end position="400"/>
    </location>
</feature>
<feature type="transmembrane region" description="Helical" evidence="1">
    <location>
        <begin position="447"/>
        <end position="467"/>
    </location>
</feature>
<feature type="transmembrane region" description="Helical" evidence="1">
    <location>
        <begin position="489"/>
        <end position="509"/>
    </location>
</feature>
<feature type="transmembrane region" description="Helical" evidence="1">
    <location>
        <begin position="525"/>
        <end position="545"/>
    </location>
</feature>
<feature type="region of interest" description="Disordered" evidence="2">
    <location>
        <begin position="45"/>
        <end position="77"/>
    </location>
</feature>